<sequence length="849" mass="95314">MKGVDDAFLGVGDKPGLDIWCIMGSNLIAIEKSLHGKFYTGNTYIILSTVELKSGVRQHNVHYWVGEEAKEEDCLTASDKAIELDVALGSNTVQYRETQGEESDKFLSYFKPCIIPIQGSLSSHMRIYGDKSKDTTMFRCEGEHVARVTEVPFSRSSLDHKAVFVVDTESKIFLFSGCNSSMQTRAKALDVVKHLKENRHCGRCEIATIEDGKLVGDSDAGDFWNLFGGYAPIPRDVQDTVMTELMTTSSKKLFWINKRNLVPVETNLLEREMLNSDRNYILDCGTEVFLWMGMTTLVSERRTSVTALEDYVRCEGRQSNARSVILTEGHETVEFKMHFQHWPKNAVPKLYEAGREKVAAIFKHQGYDVTEIPEDKPRHFISCNGSLKVWLVDNGSVTLLCTEEQEQLYNGDCYIIRYSYIEDGKDYHLFFAWSGLNSINEDRVAAASLMSGMIDSVKGHAVVAQVFEGREPEMFFLVFKSLIIFKGGRSMAYKNFVSQRSDANGWYQKNGVALFRVQGLKHDCIRAIQVDLAASSLNSSHCYILQAGGSFFTWLGSLSSPSDHNLLDRMMDKLCPLKQSLLVREGSEPDRFWEALGGRSEYLREKQVKDWPADPHLYTCHFEQGLFKAKEVFSFSQDDLVTEEILILDCVEELHIWVGHQSGVLSKEQALDIGKMFLQAGIHQDGRRPIDTTMYIVTEGDEPRFFTSFFNWDYSKQTMLGNSFERKLAILKGISQKLETPERSLRKSSSSSLPRRSPGTSSSEPTTPEQRAAARTFASASTGKLLRERSPAALSPSLSTPSPSPRSRSSASSSPASWNSTPSTVARRLFPPSLHASAEAVATGTPRRR</sequence>
<proteinExistence type="evidence at transcript level"/>
<feature type="chain" id="PRO_0000438159" description="Villin-1">
    <location>
        <begin position="1"/>
        <end position="849"/>
    </location>
</feature>
<feature type="repeat" description="Gelsolin-like 1" evidence="2">
    <location>
        <begin position="30"/>
        <end position="107"/>
    </location>
</feature>
<feature type="repeat" description="Gelsolin-like 2" evidence="2">
    <location>
        <begin position="147"/>
        <end position="213"/>
    </location>
</feature>
<feature type="repeat" description="Gelsolin-like 3" evidence="2">
    <location>
        <begin position="262"/>
        <end position="335"/>
    </location>
</feature>
<feature type="repeat" description="Gelsolin-like 4" evidence="2">
    <location>
        <begin position="405"/>
        <end position="475"/>
    </location>
</feature>
<feature type="repeat" description="Gelsolin-like 5" evidence="2">
    <location>
        <begin position="527"/>
        <end position="566"/>
    </location>
</feature>
<feature type="region of interest" description="Disordered" evidence="3">
    <location>
        <begin position="739"/>
        <end position="849"/>
    </location>
</feature>
<feature type="compositionally biased region" description="Low complexity" evidence="3">
    <location>
        <begin position="747"/>
        <end position="782"/>
    </location>
</feature>
<feature type="compositionally biased region" description="Low complexity" evidence="3">
    <location>
        <begin position="791"/>
        <end position="823"/>
    </location>
</feature>
<organism>
    <name type="scientific">Oryza sativa subsp. japonica</name>
    <name type="common">Rice</name>
    <dbReference type="NCBI Taxonomy" id="39947"/>
    <lineage>
        <taxon>Eukaryota</taxon>
        <taxon>Viridiplantae</taxon>
        <taxon>Streptophyta</taxon>
        <taxon>Embryophyta</taxon>
        <taxon>Tracheophyta</taxon>
        <taxon>Spermatophyta</taxon>
        <taxon>Magnoliopsida</taxon>
        <taxon>Liliopsida</taxon>
        <taxon>Poales</taxon>
        <taxon>Poaceae</taxon>
        <taxon>BOP clade</taxon>
        <taxon>Oryzoideae</taxon>
        <taxon>Oryzeae</taxon>
        <taxon>Oryzinae</taxon>
        <taxon>Oryza</taxon>
        <taxon>Oryza sativa</taxon>
    </lineage>
</organism>
<comment type="function">
    <text evidence="4">Ca(2+)-independent actin-binding protein. Binds actin microfilaments (MFs). Involved in actin filament bundling, severing and capping. Caps the barbed end of actin filaments and protects them from disassembly. Promotes VLN3-mediated MF severing.</text>
</comment>
<comment type="subcellular location">
    <subcellularLocation>
        <location evidence="1">Cytoplasm</location>
        <location evidence="1">Cytoskeleton</location>
    </subcellularLocation>
</comment>
<comment type="tissue specificity">
    <text evidence="4">Expressed in roots, young leaves, and inflorescences, mostly in the vasculature of roots, leaves, and filaments of the anthers. Also detected in guard cells.</text>
</comment>
<comment type="similarity">
    <text evidence="6">Belongs to the villin/gelsolin family.</text>
</comment>
<evidence type="ECO:0000250" key="1">
    <source>
        <dbReference type="UniProtKB" id="O81644"/>
    </source>
</evidence>
<evidence type="ECO:0000255" key="2"/>
<evidence type="ECO:0000256" key="3">
    <source>
        <dbReference type="SAM" id="MobiDB-lite"/>
    </source>
</evidence>
<evidence type="ECO:0000269" key="4">
    <source>
    </source>
</evidence>
<evidence type="ECO:0000303" key="5">
    <source>
    </source>
</evidence>
<evidence type="ECO:0000305" key="6"/>
<evidence type="ECO:0000312" key="7">
    <source>
        <dbReference type="EMBL" id="BAF16590.1"/>
    </source>
</evidence>
<evidence type="ECO:0000312" key="8">
    <source>
        <dbReference type="EMBL" id="BAS92329.1"/>
    </source>
</evidence>
<evidence type="ECO:0000312" key="9">
    <source>
        <dbReference type="EMBL" id="EEE62368.1"/>
    </source>
</evidence>
<gene>
    <name evidence="5" type="primary">VLN1</name>
    <name evidence="6" type="ordered locus">LOC_Os05g06110</name>
    <name evidence="7" type="ordered locus">Os05g0153000</name>
    <name evidence="9" type="ORF">OsJ_17157</name>
    <name evidence="8" type="ORF">OSNPB_050153000</name>
</gene>
<protein>
    <recommendedName>
        <fullName evidence="5">Villin-1</fullName>
    </recommendedName>
</protein>
<accession>Q0DKN3</accession>
<name>VLN1_ORYSJ</name>
<dbReference type="EMBL" id="AP008211">
    <property type="protein sequence ID" value="BAF16590.1"/>
    <property type="molecule type" value="Genomic_DNA"/>
</dbReference>
<dbReference type="EMBL" id="AP014961">
    <property type="protein sequence ID" value="BAS92329.1"/>
    <property type="molecule type" value="Genomic_DNA"/>
</dbReference>
<dbReference type="EMBL" id="CM000142">
    <property type="protein sequence ID" value="EEE62368.1"/>
    <property type="molecule type" value="Genomic_DNA"/>
</dbReference>
<dbReference type="RefSeq" id="XP_015637915.1">
    <property type="nucleotide sequence ID" value="XM_015782429.1"/>
</dbReference>
<dbReference type="SMR" id="Q0DKN3"/>
<dbReference type="FunCoup" id="Q0DKN3">
    <property type="interactions" value="605"/>
</dbReference>
<dbReference type="STRING" id="39947.Q0DKN3"/>
<dbReference type="PaxDb" id="39947-Q0DKN3"/>
<dbReference type="EnsemblPlants" id="Os05t0153000-01">
    <property type="protein sequence ID" value="Os05t0153000-01"/>
    <property type="gene ID" value="Os05g0153000"/>
</dbReference>
<dbReference type="EnsemblPlants" id="Os05t0153000-02">
    <property type="protein sequence ID" value="Os05t0153000-02"/>
    <property type="gene ID" value="Os05g0153000"/>
</dbReference>
<dbReference type="Gramene" id="Os05t0153000-01">
    <property type="protein sequence ID" value="Os05t0153000-01"/>
    <property type="gene ID" value="Os05g0153000"/>
</dbReference>
<dbReference type="Gramene" id="Os05t0153000-02">
    <property type="protein sequence ID" value="Os05t0153000-02"/>
    <property type="gene ID" value="Os05g0153000"/>
</dbReference>
<dbReference type="KEGG" id="dosa:Os05g0153000"/>
<dbReference type="eggNOG" id="KOG0443">
    <property type="taxonomic scope" value="Eukaryota"/>
</dbReference>
<dbReference type="HOGENOM" id="CLU_002568_2_1_1"/>
<dbReference type="InParanoid" id="Q0DKN3"/>
<dbReference type="OMA" id="GHESTDF"/>
<dbReference type="OrthoDB" id="6375767at2759"/>
<dbReference type="Proteomes" id="UP000000763">
    <property type="component" value="Chromosome 5"/>
</dbReference>
<dbReference type="Proteomes" id="UP000007752">
    <property type="component" value="Chromosome 5"/>
</dbReference>
<dbReference type="Proteomes" id="UP000059680">
    <property type="component" value="Chromosome 5"/>
</dbReference>
<dbReference type="GO" id="GO:0032432">
    <property type="term" value="C:actin filament bundle"/>
    <property type="evidence" value="ECO:0000250"/>
    <property type="project" value="UniProtKB"/>
</dbReference>
<dbReference type="GO" id="GO:0005737">
    <property type="term" value="C:cytoplasm"/>
    <property type="evidence" value="ECO:0007669"/>
    <property type="project" value="UniProtKB-KW"/>
</dbReference>
<dbReference type="GO" id="GO:0051015">
    <property type="term" value="F:actin filament binding"/>
    <property type="evidence" value="ECO:0000314"/>
    <property type="project" value="UniProtKB"/>
</dbReference>
<dbReference type="GO" id="GO:0051693">
    <property type="term" value="P:actin filament capping"/>
    <property type="evidence" value="ECO:0000250"/>
    <property type="project" value="UniProtKB"/>
</dbReference>
<dbReference type="GO" id="GO:0007015">
    <property type="term" value="P:actin filament organization"/>
    <property type="evidence" value="ECO:0000250"/>
    <property type="project" value="UniProtKB"/>
</dbReference>
<dbReference type="CDD" id="cd11290">
    <property type="entry name" value="gelsolin_S1_like"/>
    <property type="match status" value="1"/>
</dbReference>
<dbReference type="CDD" id="cd11293">
    <property type="entry name" value="gelsolin_S4_like"/>
    <property type="match status" value="1"/>
</dbReference>
<dbReference type="CDD" id="cd11288">
    <property type="entry name" value="gelsolin_S5_like"/>
    <property type="match status" value="1"/>
</dbReference>
<dbReference type="FunFam" id="3.40.20.10:FF:000001">
    <property type="entry name" value="Gelsolin"/>
    <property type="match status" value="1"/>
</dbReference>
<dbReference type="FunFam" id="3.40.20.10:FF:000076">
    <property type="entry name" value="Villin-1"/>
    <property type="match status" value="1"/>
</dbReference>
<dbReference type="FunFam" id="3.40.20.10:FF:000108">
    <property type="entry name" value="Villin-1"/>
    <property type="match status" value="1"/>
</dbReference>
<dbReference type="FunFam" id="3.40.20.10:FF:000059">
    <property type="entry name" value="Villin-like 1"/>
    <property type="match status" value="1"/>
</dbReference>
<dbReference type="Gene3D" id="3.40.20.10">
    <property type="entry name" value="Severin"/>
    <property type="match status" value="6"/>
</dbReference>
<dbReference type="InterPro" id="IPR029006">
    <property type="entry name" value="ADF-H/Gelsolin-like_dom_sf"/>
</dbReference>
<dbReference type="InterPro" id="IPR007123">
    <property type="entry name" value="Gelsolin-like_dom"/>
</dbReference>
<dbReference type="InterPro" id="IPR007122">
    <property type="entry name" value="Villin/Gelsolin"/>
</dbReference>
<dbReference type="PANTHER" id="PTHR11977">
    <property type="entry name" value="VILLIN"/>
    <property type="match status" value="1"/>
</dbReference>
<dbReference type="PANTHER" id="PTHR11977:SF25">
    <property type="entry name" value="VILLIN-1"/>
    <property type="match status" value="1"/>
</dbReference>
<dbReference type="Pfam" id="PF00626">
    <property type="entry name" value="Gelsolin"/>
    <property type="match status" value="5"/>
</dbReference>
<dbReference type="PRINTS" id="PR00597">
    <property type="entry name" value="GELSOLIN"/>
</dbReference>
<dbReference type="SMART" id="SM00262">
    <property type="entry name" value="GEL"/>
    <property type="match status" value="6"/>
</dbReference>
<dbReference type="SUPFAM" id="SSF55753">
    <property type="entry name" value="Actin depolymerizing proteins"/>
    <property type="match status" value="6"/>
</dbReference>
<keyword id="KW-0117">Actin capping</keyword>
<keyword id="KW-0009">Actin-binding</keyword>
<keyword id="KW-0106">Calcium</keyword>
<keyword id="KW-0963">Cytoplasm</keyword>
<keyword id="KW-0206">Cytoskeleton</keyword>
<keyword id="KW-1185">Reference proteome</keyword>
<keyword id="KW-0677">Repeat</keyword>
<reference key="1">
    <citation type="journal article" date="2005" name="Nature">
        <title>The map-based sequence of the rice genome.</title>
        <authorList>
            <consortium name="International rice genome sequencing project (IRGSP)"/>
        </authorList>
    </citation>
    <scope>NUCLEOTIDE SEQUENCE [LARGE SCALE GENOMIC DNA]</scope>
    <source>
        <strain>cv. Nipponbare</strain>
    </source>
</reference>
<reference key="2">
    <citation type="journal article" date="2008" name="Nucleic Acids Res.">
        <title>The rice annotation project database (RAP-DB): 2008 update.</title>
        <authorList>
            <consortium name="The rice annotation project (RAP)"/>
        </authorList>
    </citation>
    <scope>GENOME REANNOTATION</scope>
    <source>
        <strain>cv. Nipponbare</strain>
    </source>
</reference>
<reference key="3">
    <citation type="journal article" date="2013" name="Rice">
        <title>Improvement of the Oryza sativa Nipponbare reference genome using next generation sequence and optical map data.</title>
        <authorList>
            <person name="Kawahara Y."/>
            <person name="de la Bastide M."/>
            <person name="Hamilton J.P."/>
            <person name="Kanamori H."/>
            <person name="McCombie W.R."/>
            <person name="Ouyang S."/>
            <person name="Schwartz D.C."/>
            <person name="Tanaka T."/>
            <person name="Wu J."/>
            <person name="Zhou S."/>
            <person name="Childs K.L."/>
            <person name="Davidson R.M."/>
            <person name="Lin H."/>
            <person name="Quesada-Ocampo L."/>
            <person name="Vaillancourt B."/>
            <person name="Sakai H."/>
            <person name="Lee S.S."/>
            <person name="Kim J."/>
            <person name="Numa H."/>
            <person name="Itoh T."/>
            <person name="Buell C.R."/>
            <person name="Matsumoto T."/>
        </authorList>
    </citation>
    <scope>GENOME REANNOTATION</scope>
    <source>
        <strain>cv. Nipponbare</strain>
    </source>
</reference>
<reference key="4">
    <citation type="journal article" date="2005" name="PLoS Biol.">
        <title>The genomes of Oryza sativa: a history of duplications.</title>
        <authorList>
            <person name="Yu J."/>
            <person name="Wang J."/>
            <person name="Lin W."/>
            <person name="Li S."/>
            <person name="Li H."/>
            <person name="Zhou J."/>
            <person name="Ni P."/>
            <person name="Dong W."/>
            <person name="Hu S."/>
            <person name="Zeng C."/>
            <person name="Zhang J."/>
            <person name="Zhang Y."/>
            <person name="Li R."/>
            <person name="Xu Z."/>
            <person name="Li S."/>
            <person name="Li X."/>
            <person name="Zheng H."/>
            <person name="Cong L."/>
            <person name="Lin L."/>
            <person name="Yin J."/>
            <person name="Geng J."/>
            <person name="Li G."/>
            <person name="Shi J."/>
            <person name="Liu J."/>
            <person name="Lv H."/>
            <person name="Li J."/>
            <person name="Wang J."/>
            <person name="Deng Y."/>
            <person name="Ran L."/>
            <person name="Shi X."/>
            <person name="Wang X."/>
            <person name="Wu Q."/>
            <person name="Li C."/>
            <person name="Ren X."/>
            <person name="Wang J."/>
            <person name="Wang X."/>
            <person name="Li D."/>
            <person name="Liu D."/>
            <person name="Zhang X."/>
            <person name="Ji Z."/>
            <person name="Zhao W."/>
            <person name="Sun Y."/>
            <person name="Zhang Z."/>
            <person name="Bao J."/>
            <person name="Han Y."/>
            <person name="Dong L."/>
            <person name="Ji J."/>
            <person name="Chen P."/>
            <person name="Wu S."/>
            <person name="Liu J."/>
            <person name="Xiao Y."/>
            <person name="Bu D."/>
            <person name="Tan J."/>
            <person name="Yang L."/>
            <person name="Ye C."/>
            <person name="Zhang J."/>
            <person name="Xu J."/>
            <person name="Zhou Y."/>
            <person name="Yu Y."/>
            <person name="Zhang B."/>
            <person name="Zhuang S."/>
            <person name="Wei H."/>
            <person name="Liu B."/>
            <person name="Lei M."/>
            <person name="Yu H."/>
            <person name="Li Y."/>
            <person name="Xu H."/>
            <person name="Wei S."/>
            <person name="He X."/>
            <person name="Fang L."/>
            <person name="Zhang Z."/>
            <person name="Zhang Y."/>
            <person name="Huang X."/>
            <person name="Su Z."/>
            <person name="Tong W."/>
            <person name="Li J."/>
            <person name="Tong Z."/>
            <person name="Li S."/>
            <person name="Ye J."/>
            <person name="Wang L."/>
            <person name="Fang L."/>
            <person name="Lei T."/>
            <person name="Chen C.-S."/>
            <person name="Chen H.-C."/>
            <person name="Xu Z."/>
            <person name="Li H."/>
            <person name="Huang H."/>
            <person name="Zhang F."/>
            <person name="Xu H."/>
            <person name="Li N."/>
            <person name="Zhao C."/>
            <person name="Li S."/>
            <person name="Dong L."/>
            <person name="Huang Y."/>
            <person name="Li L."/>
            <person name="Xi Y."/>
            <person name="Qi Q."/>
            <person name="Li W."/>
            <person name="Zhang B."/>
            <person name="Hu W."/>
            <person name="Zhang Y."/>
            <person name="Tian X."/>
            <person name="Jiao Y."/>
            <person name="Liang X."/>
            <person name="Jin J."/>
            <person name="Gao L."/>
            <person name="Zheng W."/>
            <person name="Hao B."/>
            <person name="Liu S.-M."/>
            <person name="Wang W."/>
            <person name="Yuan L."/>
            <person name="Cao M."/>
            <person name="McDermott J."/>
            <person name="Samudrala R."/>
            <person name="Wang J."/>
            <person name="Wong G.K.-S."/>
            <person name="Yang H."/>
        </authorList>
    </citation>
    <scope>NUCLEOTIDE SEQUENCE [LARGE SCALE GENOMIC DNA]</scope>
    <source>
        <strain>cv. Nipponbare</strain>
    </source>
</reference>
<reference key="5">
    <citation type="journal article" date="2010" name="Plant Cell">
        <title>Arabidopsis VILLIN1 and VILLIN3 have overlapping and distinct activities in actin bundle formation and turnover.</title>
        <authorList>
            <person name="Khurana P."/>
            <person name="Henty J.L."/>
            <person name="Huang S."/>
            <person name="Staiger A.M."/>
            <person name="Blanchoin L."/>
            <person name="Staiger C.J."/>
        </authorList>
    </citation>
    <scope>FUNCTION</scope>
    <scope>TISSUE SPECIFICITY</scope>
    <scope>GENE FAMILY</scope>
    <scope>NOMENCLATURE</scope>
</reference>